<reference key="1">
    <citation type="submission" date="2007-03" db="EMBL/GenBank/DDBJ databases">
        <title>Complete sequence of Prosthecochloris vibrioformis DSM 265.</title>
        <authorList>
            <consortium name="US DOE Joint Genome Institute"/>
            <person name="Copeland A."/>
            <person name="Lucas S."/>
            <person name="Lapidus A."/>
            <person name="Barry K."/>
            <person name="Detter J.C."/>
            <person name="Glavina del Rio T."/>
            <person name="Hammon N."/>
            <person name="Israni S."/>
            <person name="Pitluck S."/>
            <person name="Schmutz J."/>
            <person name="Larimer F."/>
            <person name="Land M."/>
            <person name="Hauser L."/>
            <person name="Mikhailova N."/>
            <person name="Li T."/>
            <person name="Overmann J."/>
            <person name="Schuster S.C."/>
            <person name="Bryant D.A."/>
            <person name="Richardson P."/>
        </authorList>
    </citation>
    <scope>NUCLEOTIDE SEQUENCE [LARGE SCALE GENOMIC DNA]</scope>
    <source>
        <strain>DSM 265 / 1930</strain>
    </source>
</reference>
<evidence type="ECO:0000255" key="1">
    <source>
        <dbReference type="HAMAP-Rule" id="MF_00046"/>
    </source>
</evidence>
<keyword id="KW-0067">ATP-binding</keyword>
<keyword id="KW-0131">Cell cycle</keyword>
<keyword id="KW-0132">Cell division</keyword>
<keyword id="KW-0133">Cell shape</keyword>
<keyword id="KW-0961">Cell wall biogenesis/degradation</keyword>
<keyword id="KW-0963">Cytoplasm</keyword>
<keyword id="KW-0436">Ligase</keyword>
<keyword id="KW-0547">Nucleotide-binding</keyword>
<keyword id="KW-0573">Peptidoglycan synthesis</keyword>
<feature type="chain" id="PRO_1000074747" description="UDP-N-acetylmuramate--L-alanine ligase">
    <location>
        <begin position="1"/>
        <end position="469"/>
    </location>
</feature>
<feature type="binding site" evidence="1">
    <location>
        <begin position="114"/>
        <end position="120"/>
    </location>
    <ligand>
        <name>ATP</name>
        <dbReference type="ChEBI" id="CHEBI:30616"/>
    </ligand>
</feature>
<gene>
    <name evidence="1" type="primary">murC</name>
    <name type="ordered locus">Cvib_1752</name>
</gene>
<name>MURC_CHLPM</name>
<sequence>MELGKTKRVHIVGIGGAGMSAIAELLLKSGFGVSGSDLSSGEVTEKLAAHGATIYLGHQASQVEACDVVVYSSAVKPEDNVEIAAAMQAGIPVVKRDEMLGELMRYKSGICVAGTHGKTTTTAMVATMLIEAGESPTVMIGGISDYLKGSTVVGSGKYMVIEADEYDRAFLKLTPTIAVLNSLEAEHMDTYGTLEDLKKAFVAFANKVPFYGRVICCADWPEIRGIIGSLNRLCTTFGIDEPADVSATDIVMANGRTTFTVQAFGEVYPGVSIAVPGRHNVQNALAAFATGLELGLDPARLVHGLGCYSGMRRRFQIKYDNGRGLLVVDDYAHHPSEVKATLKAARNGWPSARIVAVFQPHLFSRTREFASEYGWALSRADMVYISSIYPSREKEEDFPGVDAGMVAGAVTKAGGKHVLYVSDSGELKRLLLEEASAAGPRGTILLFMGAGDITAMASEVARCGEKENL</sequence>
<protein>
    <recommendedName>
        <fullName evidence="1">UDP-N-acetylmuramate--L-alanine ligase</fullName>
        <ecNumber evidence="1">6.3.2.8</ecNumber>
    </recommendedName>
    <alternativeName>
        <fullName evidence="1">UDP-N-acetylmuramoyl-L-alanine synthetase</fullName>
    </alternativeName>
</protein>
<proteinExistence type="inferred from homology"/>
<comment type="function">
    <text evidence="1">Cell wall formation.</text>
</comment>
<comment type="catalytic activity">
    <reaction evidence="1">
        <text>UDP-N-acetyl-alpha-D-muramate + L-alanine + ATP = UDP-N-acetyl-alpha-D-muramoyl-L-alanine + ADP + phosphate + H(+)</text>
        <dbReference type="Rhea" id="RHEA:23372"/>
        <dbReference type="ChEBI" id="CHEBI:15378"/>
        <dbReference type="ChEBI" id="CHEBI:30616"/>
        <dbReference type="ChEBI" id="CHEBI:43474"/>
        <dbReference type="ChEBI" id="CHEBI:57972"/>
        <dbReference type="ChEBI" id="CHEBI:70757"/>
        <dbReference type="ChEBI" id="CHEBI:83898"/>
        <dbReference type="ChEBI" id="CHEBI:456216"/>
        <dbReference type="EC" id="6.3.2.8"/>
    </reaction>
</comment>
<comment type="pathway">
    <text evidence="1">Cell wall biogenesis; peptidoglycan biosynthesis.</text>
</comment>
<comment type="subcellular location">
    <subcellularLocation>
        <location evidence="1">Cytoplasm</location>
    </subcellularLocation>
</comment>
<comment type="similarity">
    <text evidence="1">Belongs to the MurCDEF family.</text>
</comment>
<accession>A4SH01</accession>
<organism>
    <name type="scientific">Chlorobium phaeovibrioides (strain DSM 265 / 1930)</name>
    <name type="common">Prosthecochloris vibrioformis (strain DSM 265)</name>
    <dbReference type="NCBI Taxonomy" id="290318"/>
    <lineage>
        <taxon>Bacteria</taxon>
        <taxon>Pseudomonadati</taxon>
        <taxon>Chlorobiota</taxon>
        <taxon>Chlorobiia</taxon>
        <taxon>Chlorobiales</taxon>
        <taxon>Chlorobiaceae</taxon>
        <taxon>Chlorobium/Pelodictyon group</taxon>
        <taxon>Chlorobium</taxon>
    </lineage>
</organism>
<dbReference type="EC" id="6.3.2.8" evidence="1"/>
<dbReference type="EMBL" id="CP000607">
    <property type="protein sequence ID" value="ABP37760.1"/>
    <property type="molecule type" value="Genomic_DNA"/>
</dbReference>
<dbReference type="SMR" id="A4SH01"/>
<dbReference type="STRING" id="290318.Cvib_1752"/>
<dbReference type="KEGG" id="pvi:Cvib_1752"/>
<dbReference type="eggNOG" id="COG0773">
    <property type="taxonomic scope" value="Bacteria"/>
</dbReference>
<dbReference type="HOGENOM" id="CLU_028104_2_2_10"/>
<dbReference type="OrthoDB" id="9804126at2"/>
<dbReference type="UniPathway" id="UPA00219"/>
<dbReference type="GO" id="GO:0005737">
    <property type="term" value="C:cytoplasm"/>
    <property type="evidence" value="ECO:0007669"/>
    <property type="project" value="UniProtKB-SubCell"/>
</dbReference>
<dbReference type="GO" id="GO:0005524">
    <property type="term" value="F:ATP binding"/>
    <property type="evidence" value="ECO:0007669"/>
    <property type="project" value="UniProtKB-UniRule"/>
</dbReference>
<dbReference type="GO" id="GO:0008763">
    <property type="term" value="F:UDP-N-acetylmuramate-L-alanine ligase activity"/>
    <property type="evidence" value="ECO:0007669"/>
    <property type="project" value="UniProtKB-UniRule"/>
</dbReference>
<dbReference type="GO" id="GO:0051301">
    <property type="term" value="P:cell division"/>
    <property type="evidence" value="ECO:0007669"/>
    <property type="project" value="UniProtKB-KW"/>
</dbReference>
<dbReference type="GO" id="GO:0071555">
    <property type="term" value="P:cell wall organization"/>
    <property type="evidence" value="ECO:0007669"/>
    <property type="project" value="UniProtKB-KW"/>
</dbReference>
<dbReference type="GO" id="GO:0009252">
    <property type="term" value="P:peptidoglycan biosynthetic process"/>
    <property type="evidence" value="ECO:0007669"/>
    <property type="project" value="UniProtKB-UniRule"/>
</dbReference>
<dbReference type="GO" id="GO:0008360">
    <property type="term" value="P:regulation of cell shape"/>
    <property type="evidence" value="ECO:0007669"/>
    <property type="project" value="UniProtKB-KW"/>
</dbReference>
<dbReference type="Gene3D" id="3.90.190.20">
    <property type="entry name" value="Mur ligase, C-terminal domain"/>
    <property type="match status" value="1"/>
</dbReference>
<dbReference type="Gene3D" id="3.40.1190.10">
    <property type="entry name" value="Mur-like, catalytic domain"/>
    <property type="match status" value="1"/>
</dbReference>
<dbReference type="Gene3D" id="3.40.50.720">
    <property type="entry name" value="NAD(P)-binding Rossmann-like Domain"/>
    <property type="match status" value="1"/>
</dbReference>
<dbReference type="HAMAP" id="MF_00046">
    <property type="entry name" value="MurC"/>
    <property type="match status" value="1"/>
</dbReference>
<dbReference type="InterPro" id="IPR036565">
    <property type="entry name" value="Mur-like_cat_sf"/>
</dbReference>
<dbReference type="InterPro" id="IPR004101">
    <property type="entry name" value="Mur_ligase_C"/>
</dbReference>
<dbReference type="InterPro" id="IPR036615">
    <property type="entry name" value="Mur_ligase_C_dom_sf"/>
</dbReference>
<dbReference type="InterPro" id="IPR013221">
    <property type="entry name" value="Mur_ligase_cen"/>
</dbReference>
<dbReference type="InterPro" id="IPR000713">
    <property type="entry name" value="Mur_ligase_N"/>
</dbReference>
<dbReference type="InterPro" id="IPR050061">
    <property type="entry name" value="MurCDEF_pg_biosynth"/>
</dbReference>
<dbReference type="InterPro" id="IPR005758">
    <property type="entry name" value="UDP-N-AcMur_Ala_ligase_MurC"/>
</dbReference>
<dbReference type="NCBIfam" id="TIGR01082">
    <property type="entry name" value="murC"/>
    <property type="match status" value="1"/>
</dbReference>
<dbReference type="PANTHER" id="PTHR43445:SF3">
    <property type="entry name" value="UDP-N-ACETYLMURAMATE--L-ALANINE LIGASE"/>
    <property type="match status" value="1"/>
</dbReference>
<dbReference type="PANTHER" id="PTHR43445">
    <property type="entry name" value="UDP-N-ACETYLMURAMATE--L-ALANINE LIGASE-RELATED"/>
    <property type="match status" value="1"/>
</dbReference>
<dbReference type="Pfam" id="PF01225">
    <property type="entry name" value="Mur_ligase"/>
    <property type="match status" value="1"/>
</dbReference>
<dbReference type="Pfam" id="PF02875">
    <property type="entry name" value="Mur_ligase_C"/>
    <property type="match status" value="1"/>
</dbReference>
<dbReference type="Pfam" id="PF08245">
    <property type="entry name" value="Mur_ligase_M"/>
    <property type="match status" value="1"/>
</dbReference>
<dbReference type="SUPFAM" id="SSF51984">
    <property type="entry name" value="MurCD N-terminal domain"/>
    <property type="match status" value="1"/>
</dbReference>
<dbReference type="SUPFAM" id="SSF53623">
    <property type="entry name" value="MurD-like peptide ligases, catalytic domain"/>
    <property type="match status" value="1"/>
</dbReference>
<dbReference type="SUPFAM" id="SSF53244">
    <property type="entry name" value="MurD-like peptide ligases, peptide-binding domain"/>
    <property type="match status" value="1"/>
</dbReference>